<keyword id="KW-0614">Plasmid</keyword>
<keyword id="KW-1185">Reference proteome</keyword>
<keyword id="KW-0732">Signal</keyword>
<geneLocation type="plasmid">
    <name>sym pNGR234a</name>
</geneLocation>
<protein>
    <recommendedName>
        <fullName>Uncharacterized protein y4bG</fullName>
    </recommendedName>
</protein>
<sequence length="271" mass="30034">MARELLFLACAIVIADSWPAKAIDIESLFGHTIRIEGEYPERTLKVDDRELHRNALLLFDGLFIVDGVPALIGSSSNGGNACDGTPFVVSFPPGARPRFDGPIEACAYIGHEVSDERILFSTNNIPGQGREQWAWTPADGMKELGVAAFVPDDKSGWQALRERSFEHPSDALKNADIAATIKSLLGADFEAFQAIITGTGSGEFKSDDYIGRTCTPHMCREQEALLFLSAKDRRAYAAWKPHQKKIIVHPPVKQWPEKAKQELRAWAETWK</sequence>
<accession>P55374</accession>
<organism>
    <name type="scientific">Sinorhizobium fredii (strain NBRC 101917 / NGR234)</name>
    <dbReference type="NCBI Taxonomy" id="394"/>
    <lineage>
        <taxon>Bacteria</taxon>
        <taxon>Pseudomonadati</taxon>
        <taxon>Pseudomonadota</taxon>
        <taxon>Alphaproteobacteria</taxon>
        <taxon>Hyphomicrobiales</taxon>
        <taxon>Rhizobiaceae</taxon>
        <taxon>Sinorhizobium/Ensifer group</taxon>
        <taxon>Sinorhizobium</taxon>
    </lineage>
</organism>
<dbReference type="EMBL" id="U00090">
    <property type="protein sequence ID" value="AAB91622.1"/>
    <property type="molecule type" value="Genomic_DNA"/>
</dbReference>
<dbReference type="RefSeq" id="NP_443784.1">
    <property type="nucleotide sequence ID" value="NC_000914.2"/>
</dbReference>
<dbReference type="RefSeq" id="WP_010875065.1">
    <property type="nucleotide sequence ID" value="NC_000914.2"/>
</dbReference>
<dbReference type="KEGG" id="rhi:NGR_a00230"/>
<dbReference type="eggNOG" id="ENOG503364J">
    <property type="taxonomic scope" value="Bacteria"/>
</dbReference>
<dbReference type="HOGENOM" id="CLU_088573_0_0_5"/>
<dbReference type="OrthoDB" id="8350550at2"/>
<dbReference type="Proteomes" id="UP000001054">
    <property type="component" value="Plasmid pNGR234a"/>
</dbReference>
<evidence type="ECO:0000255" key="1"/>
<gene>
    <name type="ordered locus">NGR_a00230</name>
    <name type="ORF">y4bG</name>
</gene>
<reference key="1">
    <citation type="journal article" date="1997" name="Nature">
        <title>Molecular basis of symbiosis between Rhizobium and legumes.</title>
        <authorList>
            <person name="Freiberg C.A."/>
            <person name="Fellay R."/>
            <person name="Bairoch A."/>
            <person name="Broughton W.J."/>
            <person name="Rosenthal A."/>
            <person name="Perret X."/>
        </authorList>
    </citation>
    <scope>NUCLEOTIDE SEQUENCE [LARGE SCALE GENOMIC DNA]</scope>
    <source>
        <strain>NBRC 101917 / NGR234</strain>
    </source>
</reference>
<reference key="2">
    <citation type="journal article" date="2009" name="Appl. Environ. Microbiol.">
        <title>Rhizobium sp. strain NGR234 possesses a remarkable number of secretion systems.</title>
        <authorList>
            <person name="Schmeisser C."/>
            <person name="Liesegang H."/>
            <person name="Krysciak D."/>
            <person name="Bakkou N."/>
            <person name="Le Quere A."/>
            <person name="Wollherr A."/>
            <person name="Heinemeyer I."/>
            <person name="Morgenstern B."/>
            <person name="Pommerening-Roeser A."/>
            <person name="Flores M."/>
            <person name="Palacios R."/>
            <person name="Brenner S."/>
            <person name="Gottschalk G."/>
            <person name="Schmitz R.A."/>
            <person name="Broughton W.J."/>
            <person name="Perret X."/>
            <person name="Strittmatter A.W."/>
            <person name="Streit W.R."/>
        </authorList>
    </citation>
    <scope>NUCLEOTIDE SEQUENCE [LARGE SCALE GENOMIC DNA]</scope>
    <source>
        <strain>NBRC 101917 / NGR234</strain>
    </source>
</reference>
<feature type="signal peptide" evidence="1">
    <location>
        <begin position="1"/>
        <end position="22"/>
    </location>
</feature>
<feature type="chain" id="PRO_0000014159" description="Uncharacterized protein y4bG">
    <location>
        <begin position="23"/>
        <end position="271"/>
    </location>
</feature>
<proteinExistence type="inferred from homology"/>
<name>Y4BG_SINFN</name>